<organism>
    <name type="scientific">Arabidopsis thaliana</name>
    <name type="common">Mouse-ear cress</name>
    <dbReference type="NCBI Taxonomy" id="3702"/>
    <lineage>
        <taxon>Eukaryota</taxon>
        <taxon>Viridiplantae</taxon>
        <taxon>Streptophyta</taxon>
        <taxon>Embryophyta</taxon>
        <taxon>Tracheophyta</taxon>
        <taxon>Spermatophyta</taxon>
        <taxon>Magnoliopsida</taxon>
        <taxon>eudicotyledons</taxon>
        <taxon>Gunneridae</taxon>
        <taxon>Pentapetalae</taxon>
        <taxon>rosids</taxon>
        <taxon>malvids</taxon>
        <taxon>Brassicales</taxon>
        <taxon>Brassicaceae</taxon>
        <taxon>Camelineae</taxon>
        <taxon>Arabidopsis</taxon>
    </lineage>
</organism>
<gene>
    <name type="primary">LBD16</name>
    <name type="synonym">ASL18</name>
    <name type="ordered locus">At2g42430</name>
    <name type="ORF">MHK10.15</name>
</gene>
<dbReference type="EMBL" id="AF447890">
    <property type="protein sequence ID" value="AAL38035.1"/>
    <property type="molecule type" value="mRNA"/>
</dbReference>
<dbReference type="EMBL" id="AB473851">
    <property type="protein sequence ID" value="BAH10562.1"/>
    <property type="molecule type" value="mRNA"/>
</dbReference>
<dbReference type="EMBL" id="AC005956">
    <property type="protein sequence ID" value="AAD23725.1"/>
    <property type="molecule type" value="Genomic_DNA"/>
</dbReference>
<dbReference type="EMBL" id="CP002685">
    <property type="protein sequence ID" value="AEC10119.1"/>
    <property type="molecule type" value="Genomic_DNA"/>
</dbReference>
<dbReference type="EMBL" id="AF345339">
    <property type="protein sequence ID" value="AAK31143.1"/>
    <property type="molecule type" value="mRNA"/>
</dbReference>
<dbReference type="EMBL" id="AF410334">
    <property type="protein sequence ID" value="AAK95320.1"/>
    <property type="molecule type" value="mRNA"/>
</dbReference>
<dbReference type="EMBL" id="BT000866">
    <property type="protein sequence ID" value="AAN38703.1"/>
    <property type="molecule type" value="mRNA"/>
</dbReference>
<dbReference type="EMBL" id="AK230268">
    <property type="protein sequence ID" value="BAF02070.1"/>
    <property type="molecule type" value="mRNA"/>
</dbReference>
<dbReference type="PIR" id="G84853">
    <property type="entry name" value="G84853"/>
</dbReference>
<dbReference type="RefSeq" id="NP_565973.1">
    <property type="nucleotide sequence ID" value="NM_129804.4"/>
</dbReference>
<dbReference type="SMR" id="Q9SLB7"/>
<dbReference type="BioGRID" id="4180">
    <property type="interactions" value="5"/>
</dbReference>
<dbReference type="FunCoup" id="Q9SLB7">
    <property type="interactions" value="1"/>
</dbReference>
<dbReference type="IntAct" id="Q9SLB7">
    <property type="interactions" value="3"/>
</dbReference>
<dbReference type="STRING" id="3702.Q9SLB7"/>
<dbReference type="PaxDb" id="3702-AT2G42430.1"/>
<dbReference type="ProteomicsDB" id="237074"/>
<dbReference type="EnsemblPlants" id="AT2G42430.1">
    <property type="protein sequence ID" value="AT2G42430.1"/>
    <property type="gene ID" value="AT2G42430"/>
</dbReference>
<dbReference type="GeneID" id="818843"/>
<dbReference type="Gramene" id="AT2G42430.1">
    <property type="protein sequence ID" value="AT2G42430.1"/>
    <property type="gene ID" value="AT2G42430"/>
</dbReference>
<dbReference type="KEGG" id="ath:AT2G42430"/>
<dbReference type="Araport" id="AT2G42430"/>
<dbReference type="TAIR" id="AT2G42430">
    <property type="gene designation" value="LBD16"/>
</dbReference>
<dbReference type="eggNOG" id="ENOG502QRSE">
    <property type="taxonomic scope" value="Eukaryota"/>
</dbReference>
<dbReference type="HOGENOM" id="CLU_058353_3_4_1"/>
<dbReference type="InParanoid" id="Q9SLB7"/>
<dbReference type="OMA" id="PTYTMNS"/>
<dbReference type="PhylomeDB" id="Q9SLB7"/>
<dbReference type="PRO" id="PR:Q9SLB7"/>
<dbReference type="Proteomes" id="UP000006548">
    <property type="component" value="Chromosome 2"/>
</dbReference>
<dbReference type="ExpressionAtlas" id="Q9SLB7">
    <property type="expression patterns" value="baseline and differential"/>
</dbReference>
<dbReference type="GO" id="GO:0005634">
    <property type="term" value="C:nucleus"/>
    <property type="evidence" value="ECO:0000314"/>
    <property type="project" value="TAIR"/>
</dbReference>
<dbReference type="GO" id="GO:1990841">
    <property type="term" value="F:promoter-specific chromatin binding"/>
    <property type="evidence" value="ECO:0000353"/>
    <property type="project" value="TAIR"/>
</dbReference>
<dbReference type="GO" id="GO:0000976">
    <property type="term" value="F:transcription cis-regulatory region binding"/>
    <property type="evidence" value="ECO:0000353"/>
    <property type="project" value="TAIR"/>
</dbReference>
<dbReference type="GO" id="GO:1990110">
    <property type="term" value="P:callus formation"/>
    <property type="evidence" value="ECO:0000315"/>
    <property type="project" value="TAIR"/>
</dbReference>
<dbReference type="GO" id="GO:0010311">
    <property type="term" value="P:lateral root formation"/>
    <property type="evidence" value="ECO:0000315"/>
    <property type="project" value="TAIR"/>
</dbReference>
<dbReference type="GO" id="GO:0045893">
    <property type="term" value="P:positive regulation of DNA-templated transcription"/>
    <property type="evidence" value="ECO:0000314"/>
    <property type="project" value="UniProtKB"/>
</dbReference>
<dbReference type="InterPro" id="IPR004883">
    <property type="entry name" value="LOB"/>
</dbReference>
<dbReference type="PANTHER" id="PTHR31529">
    <property type="entry name" value="LOB DOMAIN CONTAINING PROTEIN"/>
    <property type="match status" value="1"/>
</dbReference>
<dbReference type="PANTHER" id="PTHR31529:SF23">
    <property type="entry name" value="LOB DOMAIN-CONTAINING PROTEIN 16"/>
    <property type="match status" value="1"/>
</dbReference>
<dbReference type="Pfam" id="PF03195">
    <property type="entry name" value="LOB"/>
    <property type="match status" value="1"/>
</dbReference>
<dbReference type="PROSITE" id="PS50891">
    <property type="entry name" value="LOB"/>
    <property type="match status" value="1"/>
</dbReference>
<sequence length="245" mass="26465">MASSGNGTTAGTGSPCGACKFLRRKCASDCIFAPYFSSEQGAARFAAIHKVFGASNVSKLLLNVPIHDRCEAVVTIAYEAQARLHDPVYGCVSHIFALQQQVAFLQSQVMQMKAQIAGHQTSAAGDLRHSSESTNQFMTWQQTSVSPIGSAYSTPYNHHQPYYGHVNPNNPVSPQSSLEESFSNTSSDVTTTANVRETHHQTGGGVYGHDGIGFHEGYPNKKRSVSYCSSDLGELQALALRMMKN</sequence>
<protein>
    <recommendedName>
        <fullName>LOB domain-containing protein 16</fullName>
    </recommendedName>
    <alternativeName>
        <fullName>ASYMMETRIC LEAVES 2-like protein 18</fullName>
        <shortName>AS2-like protein 18</shortName>
    </alternativeName>
</protein>
<reference key="1">
    <citation type="journal article" date="2002" name="Plant Physiol.">
        <title>The LATERAL ORGAN BOUNDARIES gene defines a novel, plant-specific gene family.</title>
        <authorList>
            <person name="Shuai B."/>
            <person name="Reynaga-Pena C.G."/>
            <person name="Springer P.S."/>
        </authorList>
    </citation>
    <scope>NUCLEOTIDE SEQUENCE [MRNA]</scope>
    <scope>TISSUE SPECIFICITY</scope>
    <scope>GENE FAMILY</scope>
    <scope>NOMENCLATURE</scope>
    <source>
        <strain>cv. Columbia</strain>
    </source>
</reference>
<reference key="2">
    <citation type="journal article" date="2009" name="Plant J.">
        <title>Characterization of genes in the ASYMMETRIC LEAVES2/LATERAL ORGAN BOUNDARIES (AS2/LOB) family in Arabidopsis thaliana, and functional and molecular comparisons between AS2 and other family members.</title>
        <authorList>
            <person name="Matsumura Y."/>
            <person name="Iwakawa H."/>
            <person name="Machida Y."/>
            <person name="Machida C."/>
        </authorList>
    </citation>
    <scope>NUCLEOTIDE SEQUENCE [MRNA]</scope>
    <source>
        <strain>cv. Columbia</strain>
    </source>
</reference>
<reference key="3">
    <citation type="journal article" date="1999" name="Nature">
        <title>Sequence and analysis of chromosome 2 of the plant Arabidopsis thaliana.</title>
        <authorList>
            <person name="Lin X."/>
            <person name="Kaul S."/>
            <person name="Rounsley S.D."/>
            <person name="Shea T.P."/>
            <person name="Benito M.-I."/>
            <person name="Town C.D."/>
            <person name="Fujii C.Y."/>
            <person name="Mason T.M."/>
            <person name="Bowman C.L."/>
            <person name="Barnstead M.E."/>
            <person name="Feldblyum T.V."/>
            <person name="Buell C.R."/>
            <person name="Ketchum K.A."/>
            <person name="Lee J.J."/>
            <person name="Ronning C.M."/>
            <person name="Koo H.L."/>
            <person name="Moffat K.S."/>
            <person name="Cronin L.A."/>
            <person name="Shen M."/>
            <person name="Pai G."/>
            <person name="Van Aken S."/>
            <person name="Umayam L."/>
            <person name="Tallon L.J."/>
            <person name="Gill J.E."/>
            <person name="Adams M.D."/>
            <person name="Carrera A.J."/>
            <person name="Creasy T.H."/>
            <person name="Goodman H.M."/>
            <person name="Somerville C.R."/>
            <person name="Copenhaver G.P."/>
            <person name="Preuss D."/>
            <person name="Nierman W.C."/>
            <person name="White O."/>
            <person name="Eisen J.A."/>
            <person name="Salzberg S.L."/>
            <person name="Fraser C.M."/>
            <person name="Venter J.C."/>
        </authorList>
    </citation>
    <scope>NUCLEOTIDE SEQUENCE [LARGE SCALE GENOMIC DNA]</scope>
    <source>
        <strain>cv. Columbia</strain>
    </source>
</reference>
<reference key="4">
    <citation type="journal article" date="2017" name="Plant J.">
        <title>Araport11: a complete reannotation of the Arabidopsis thaliana reference genome.</title>
        <authorList>
            <person name="Cheng C.Y."/>
            <person name="Krishnakumar V."/>
            <person name="Chan A.P."/>
            <person name="Thibaud-Nissen F."/>
            <person name="Schobel S."/>
            <person name="Town C.D."/>
        </authorList>
    </citation>
    <scope>GENOME REANNOTATION</scope>
    <source>
        <strain>cv. Columbia</strain>
    </source>
</reference>
<reference key="5">
    <citation type="journal article" date="2002" name="Plant Physiol.">
        <title>Cloning and sequencing of cDNAs for hypothetical genes from chromosome 2 of Arabidopsis.</title>
        <authorList>
            <person name="Xiao Y.-L."/>
            <person name="Malik M."/>
            <person name="Whitelaw C.A."/>
            <person name="Town C.D."/>
        </authorList>
    </citation>
    <scope>NUCLEOTIDE SEQUENCE [LARGE SCALE MRNA]</scope>
    <source>
        <strain>cv. Columbia</strain>
    </source>
</reference>
<reference key="6">
    <citation type="journal article" date="2003" name="Science">
        <title>Empirical analysis of transcriptional activity in the Arabidopsis genome.</title>
        <authorList>
            <person name="Yamada K."/>
            <person name="Lim J."/>
            <person name="Dale J.M."/>
            <person name="Chen H."/>
            <person name="Shinn P."/>
            <person name="Palm C.J."/>
            <person name="Southwick A.M."/>
            <person name="Wu H.C."/>
            <person name="Kim C.J."/>
            <person name="Nguyen M."/>
            <person name="Pham P.K."/>
            <person name="Cheuk R.F."/>
            <person name="Karlin-Newmann G."/>
            <person name="Liu S.X."/>
            <person name="Lam B."/>
            <person name="Sakano H."/>
            <person name="Wu T."/>
            <person name="Yu G."/>
            <person name="Miranda M."/>
            <person name="Quach H.L."/>
            <person name="Tripp M."/>
            <person name="Chang C.H."/>
            <person name="Lee J.M."/>
            <person name="Toriumi M.J."/>
            <person name="Chan M.M."/>
            <person name="Tang C.C."/>
            <person name="Onodera C.S."/>
            <person name="Deng J.M."/>
            <person name="Akiyama K."/>
            <person name="Ansari Y."/>
            <person name="Arakawa T."/>
            <person name="Banh J."/>
            <person name="Banno F."/>
            <person name="Bowser L."/>
            <person name="Brooks S.Y."/>
            <person name="Carninci P."/>
            <person name="Chao Q."/>
            <person name="Choy N."/>
            <person name="Enju A."/>
            <person name="Goldsmith A.D."/>
            <person name="Gurjal M."/>
            <person name="Hansen N.F."/>
            <person name="Hayashizaki Y."/>
            <person name="Johnson-Hopson C."/>
            <person name="Hsuan V.W."/>
            <person name="Iida K."/>
            <person name="Karnes M."/>
            <person name="Khan S."/>
            <person name="Koesema E."/>
            <person name="Ishida J."/>
            <person name="Jiang P.X."/>
            <person name="Jones T."/>
            <person name="Kawai J."/>
            <person name="Kamiya A."/>
            <person name="Meyers C."/>
            <person name="Nakajima M."/>
            <person name="Narusaka M."/>
            <person name="Seki M."/>
            <person name="Sakurai T."/>
            <person name="Satou M."/>
            <person name="Tamse R."/>
            <person name="Vaysberg M."/>
            <person name="Wallender E.K."/>
            <person name="Wong C."/>
            <person name="Yamamura Y."/>
            <person name="Yuan S."/>
            <person name="Shinozaki K."/>
            <person name="Davis R.W."/>
            <person name="Theologis A."/>
            <person name="Ecker J.R."/>
        </authorList>
    </citation>
    <scope>NUCLEOTIDE SEQUENCE [LARGE SCALE MRNA]</scope>
    <source>
        <strain>cv. Columbia</strain>
    </source>
</reference>
<reference key="7">
    <citation type="submission" date="2006-07" db="EMBL/GenBank/DDBJ databases">
        <title>Large-scale analysis of RIKEN Arabidopsis full-length (RAFL) cDNAs.</title>
        <authorList>
            <person name="Totoki Y."/>
            <person name="Seki M."/>
            <person name="Ishida J."/>
            <person name="Nakajima M."/>
            <person name="Enju A."/>
            <person name="Kamiya A."/>
            <person name="Narusaka M."/>
            <person name="Shin-i T."/>
            <person name="Nakagawa M."/>
            <person name="Sakamoto N."/>
            <person name="Oishi K."/>
            <person name="Kohara Y."/>
            <person name="Kobayashi M."/>
            <person name="Toyoda A."/>
            <person name="Sakaki Y."/>
            <person name="Sakurai T."/>
            <person name="Iida K."/>
            <person name="Akiyama K."/>
            <person name="Satou M."/>
            <person name="Toyoda T."/>
            <person name="Konagaya A."/>
            <person name="Carninci P."/>
            <person name="Kawai J."/>
            <person name="Hayashizaki Y."/>
            <person name="Shinozaki K."/>
        </authorList>
    </citation>
    <scope>NUCLEOTIDE SEQUENCE [LARGE SCALE MRNA]</scope>
    <source>
        <strain>cv. Columbia</strain>
    </source>
</reference>
<reference key="8">
    <citation type="journal article" date="2002" name="Plant Cell Physiol.">
        <title>The ASYMMETRIC LEAVES2 gene of Arabidopsis thaliana, required for formation of a symmetric flat leaf lamina, encodes a member of a novel family of proteins characterized by cysteine repeats and a leucine zipper.</title>
        <authorList>
            <person name="Iwakawa H."/>
            <person name="Ueno Y."/>
            <person name="Semiarti E."/>
            <person name="Onouchi H."/>
            <person name="Kojima S."/>
            <person name="Tsukaya H."/>
            <person name="Hasebe M."/>
            <person name="Soma T."/>
            <person name="Ikezaki M."/>
            <person name="Machida C."/>
            <person name="Machida Y."/>
        </authorList>
    </citation>
    <scope>GENE FAMILY</scope>
    <scope>NOMENCLATURE</scope>
</reference>
<reference key="9">
    <citation type="journal article" date="2005" name="Plant Cell">
        <title>Functional genomic analysis of the AUXIN RESPONSE FACTOR gene family members in Arabidopsis thaliana: unique and overlapping functions of ARF7 and ARF19.</title>
        <authorList>
            <person name="Okushima Y."/>
            <person name="Overvoorde P.J."/>
            <person name="Arima K."/>
            <person name="Alonso J.M."/>
            <person name="Chan A."/>
            <person name="Chang C."/>
            <person name="Ecker J.R."/>
            <person name="Hughes B."/>
            <person name="Lui A."/>
            <person name="Nguyen D."/>
            <person name="Onodera C."/>
            <person name="Quach H."/>
            <person name="Smith A."/>
            <person name="Yu G."/>
            <person name="Theologis A."/>
        </authorList>
    </citation>
    <scope>INDUCTION BY AUXIN</scope>
</reference>
<reference key="10">
    <citation type="journal article" date="2007" name="Plant Cell">
        <title>ARF7 and ARF19 regulate lateral root formation via direct activation of LBD/ASL genes in Arabidopsis.</title>
        <authorList>
            <person name="Okushima Y."/>
            <person name="Fukaki H."/>
            <person name="Onoda M."/>
            <person name="Theologis A."/>
            <person name="Tasaka M."/>
        </authorList>
    </citation>
    <scope>FUNCTION</scope>
    <scope>SUBCELLULAR LOCATION</scope>
    <scope>INDUCTION BY AUXIN</scope>
</reference>
<reference key="11">
    <citation type="journal article" date="2009" name="Plant Physiol.">
        <title>LBD18/ASL20 regulates lateral root formation in combination with LBD16/ASL18 downstream of ARF7 and ARF19 in Arabidopsis.</title>
        <authorList>
            <person name="Lee H.W."/>
            <person name="Kim N.Y."/>
            <person name="Lee D.J."/>
            <person name="Kim J."/>
        </authorList>
    </citation>
    <scope>FUNCTION</scope>
    <scope>DEVELOPMENTAL STAGE</scope>
    <scope>DISRUPTION PHENOTYPE</scope>
</reference>
<reference key="12">
    <citation type="journal article" date="2013" name="Mol. Plant">
        <title>The conserved proline residue in the LOB domain of LBD18 is critical for DNA-binding and biological function.</title>
        <authorList>
            <person name="Lee H.W."/>
            <person name="Kim M.J."/>
            <person name="Park M.Y."/>
            <person name="Han K.H."/>
            <person name="Kim J."/>
        </authorList>
    </citation>
    <scope>SUBUNIT</scope>
    <scope>MUTAGENESIS OF PRO-87</scope>
</reference>
<reference key="13">
    <citation type="journal article" date="2013" name="Plant Cell Physiol.">
        <title>The AP2/EREBP gene PUCHI Co-Acts with LBD16/ASL18 and LBD18/ASL20 downstream of ARF7 and ARF19 to regulate lateral root development in Arabidopsis.</title>
        <authorList>
            <person name="Kang N.Y."/>
            <person name="Lee H.W."/>
            <person name="Kim J."/>
        </authorList>
    </citation>
    <scope>FUNCTION</scope>
    <scope>INDUCTION BY AUXIN</scope>
</reference>
<reference key="14">
    <citation type="journal article" date="2013" name="Plant J.">
        <title>LBD18 acts as a transcriptional activator that directly binds to the EXPANSIN14 promoter in promoting lateral root emergence of Arabidopsis.</title>
        <authorList>
            <person name="Lee H.W."/>
            <person name="Kim M.J."/>
            <person name="Kim N.Y."/>
            <person name="Lee S.H."/>
            <person name="Kim J."/>
        </authorList>
    </citation>
    <scope>FUNCTION</scope>
</reference>
<reference key="15">
    <citation type="journal article" date="2015" name="Plant Physiol.">
        <title>Lateral organ boundaries domain16 and 18 act downstream of the AUXIN1 and LIKE-AUXIN3 auxin influx carriers to control lateral root development in Arabidopsis.</title>
        <authorList>
            <person name="Lee H.W."/>
            <person name="Cho C."/>
            <person name="Kim J."/>
        </authorList>
    </citation>
    <scope>FUNCTION</scope>
</reference>
<accession>Q9SLB7</accession>
<accession>B7XG72</accession>
<accession>Q0WLD7</accession>
<name>LBD16_ARATH</name>
<comment type="function">
    <text evidence="5 6 7 9 10">Transcriptional activator (PubMed:19717544, PubMed:22974309). Involved in lateral root formation. Regulated by the transcriptional activators ARF7 and ARF19 (PubMed:17259263). Functions in the initiation and emergence of lateral roots, in conjunction with LBD18, downstream of ARF7 and ARF19 (PubMed:19717544, PubMed:23749813). Acts downstream of the auxin influx carriers AUX1 and LAX1 in the regulation of lateral root initiation and development (PubMed:26059335).</text>
</comment>
<comment type="subunit">
    <text evidence="8">Homodimer and heterodimer with LBD18.</text>
</comment>
<comment type="subcellular location">
    <subcellularLocation>
        <location evidence="5">Nucleus</location>
    </subcellularLocation>
</comment>
<comment type="tissue specificity">
    <text evidence="3">Expressed in roots and faintly in shoots.</text>
</comment>
<comment type="developmental stage">
    <text evidence="6">During lateral root formation, expressed in the lateral root primordia, and the developing, emerged, and mature lateral roots.</text>
</comment>
<comment type="induction">
    <text evidence="4 5 9">By auxin.</text>
</comment>
<comment type="disruption phenotype">
    <text evidence="6">Reduced number of lateral roots.</text>
</comment>
<comment type="similarity">
    <text evidence="11">Belongs to the LOB domain-containing protein family.</text>
</comment>
<keyword id="KW-0539">Nucleus</keyword>
<keyword id="KW-1185">Reference proteome</keyword>
<evidence type="ECO:0000255" key="1">
    <source>
        <dbReference type="PROSITE-ProRule" id="PRU00291"/>
    </source>
</evidence>
<evidence type="ECO:0000256" key="2">
    <source>
        <dbReference type="SAM" id="MobiDB-lite"/>
    </source>
</evidence>
<evidence type="ECO:0000269" key="3">
    <source>
    </source>
</evidence>
<evidence type="ECO:0000269" key="4">
    <source>
    </source>
</evidence>
<evidence type="ECO:0000269" key="5">
    <source>
    </source>
</evidence>
<evidence type="ECO:0000269" key="6">
    <source>
    </source>
</evidence>
<evidence type="ECO:0000269" key="7">
    <source>
    </source>
</evidence>
<evidence type="ECO:0000269" key="8">
    <source>
    </source>
</evidence>
<evidence type="ECO:0000269" key="9">
    <source>
    </source>
</evidence>
<evidence type="ECO:0000269" key="10">
    <source>
    </source>
</evidence>
<evidence type="ECO:0000305" key="11"/>
<feature type="chain" id="PRO_0000132267" description="LOB domain-containing protein 16">
    <location>
        <begin position="1"/>
        <end position="245"/>
    </location>
</feature>
<feature type="domain" description="LOB" evidence="1">
    <location>
        <begin position="14"/>
        <end position="116"/>
    </location>
</feature>
<feature type="region of interest" description="Disordered" evidence="2">
    <location>
        <begin position="162"/>
        <end position="183"/>
    </location>
</feature>
<feature type="mutagenesis site" description="Loss of function in lateral root formation." evidence="8">
    <original>P</original>
    <variation>L</variation>
    <location>
        <position position="87"/>
    </location>
</feature>
<proteinExistence type="evidence at protein level"/>